<organism>
    <name type="scientific">Pyrobaculum neutrophilum (strain DSM 2338 / JCM 9278 / NBRC 100436 / V24Sta)</name>
    <name type="common">Thermoproteus neutrophilus</name>
    <dbReference type="NCBI Taxonomy" id="444157"/>
    <lineage>
        <taxon>Archaea</taxon>
        <taxon>Thermoproteota</taxon>
        <taxon>Thermoprotei</taxon>
        <taxon>Thermoproteales</taxon>
        <taxon>Thermoproteaceae</taxon>
        <taxon>Pyrobaculum</taxon>
    </lineage>
</organism>
<feature type="chain" id="PRO_1000136856" description="Probable tRNA pseudouridine synthase D">
    <location>
        <begin position="1"/>
        <end position="412"/>
    </location>
</feature>
<feature type="domain" description="TRUD" evidence="1">
    <location>
        <begin position="167"/>
        <end position="370"/>
    </location>
</feature>
<feature type="active site" description="Nucleophile" evidence="1">
    <location>
        <position position="97"/>
    </location>
</feature>
<dbReference type="EC" id="5.4.99.27" evidence="1"/>
<dbReference type="EMBL" id="CP001014">
    <property type="protein sequence ID" value="ACB40517.1"/>
    <property type="molecule type" value="Genomic_DNA"/>
</dbReference>
<dbReference type="RefSeq" id="WP_012350936.1">
    <property type="nucleotide sequence ID" value="NC_010525.1"/>
</dbReference>
<dbReference type="SMR" id="B1Y9W7"/>
<dbReference type="STRING" id="444157.Tneu_1594"/>
<dbReference type="GeneID" id="6164795"/>
<dbReference type="KEGG" id="tne:Tneu_1594"/>
<dbReference type="eggNOG" id="arCOG04252">
    <property type="taxonomic scope" value="Archaea"/>
</dbReference>
<dbReference type="HOGENOM" id="CLU_005281_4_1_2"/>
<dbReference type="OrthoDB" id="1798at2157"/>
<dbReference type="Proteomes" id="UP000001694">
    <property type="component" value="Chromosome"/>
</dbReference>
<dbReference type="GO" id="GO:0003723">
    <property type="term" value="F:RNA binding"/>
    <property type="evidence" value="ECO:0007669"/>
    <property type="project" value="InterPro"/>
</dbReference>
<dbReference type="GO" id="GO:0160150">
    <property type="term" value="F:tRNA pseudouridine(13) synthase activity"/>
    <property type="evidence" value="ECO:0007669"/>
    <property type="project" value="UniProtKB-EC"/>
</dbReference>
<dbReference type="GO" id="GO:0031119">
    <property type="term" value="P:tRNA pseudouridine synthesis"/>
    <property type="evidence" value="ECO:0007669"/>
    <property type="project" value="UniProtKB-UniRule"/>
</dbReference>
<dbReference type="Gene3D" id="1.10.1510.30">
    <property type="match status" value="1"/>
</dbReference>
<dbReference type="Gene3D" id="3.30.70.3160">
    <property type="match status" value="1"/>
</dbReference>
<dbReference type="Gene3D" id="3.30.2350.20">
    <property type="entry name" value="TruD, catalytic domain"/>
    <property type="match status" value="1"/>
</dbReference>
<dbReference type="HAMAP" id="MF_01082">
    <property type="entry name" value="TruD"/>
    <property type="match status" value="1"/>
</dbReference>
<dbReference type="InterPro" id="IPR020103">
    <property type="entry name" value="PsdUridine_synth_cat_dom_sf"/>
</dbReference>
<dbReference type="InterPro" id="IPR001656">
    <property type="entry name" value="PsdUridine_synth_TruD"/>
</dbReference>
<dbReference type="InterPro" id="IPR020119">
    <property type="entry name" value="PsdUridine_synth_TruD_CS"/>
</dbReference>
<dbReference type="InterPro" id="IPR011760">
    <property type="entry name" value="PsdUridine_synth_TruD_insert"/>
</dbReference>
<dbReference type="InterPro" id="IPR042214">
    <property type="entry name" value="TruD_catalytic"/>
</dbReference>
<dbReference type="NCBIfam" id="TIGR00094">
    <property type="entry name" value="tRNA_TruD_broad"/>
    <property type="match status" value="1"/>
</dbReference>
<dbReference type="PANTHER" id="PTHR13326:SF21">
    <property type="entry name" value="PSEUDOURIDYLATE SYNTHASE PUS7L"/>
    <property type="match status" value="1"/>
</dbReference>
<dbReference type="PANTHER" id="PTHR13326">
    <property type="entry name" value="TRNA PSEUDOURIDINE SYNTHASE D"/>
    <property type="match status" value="1"/>
</dbReference>
<dbReference type="Pfam" id="PF01142">
    <property type="entry name" value="TruD"/>
    <property type="match status" value="1"/>
</dbReference>
<dbReference type="PIRSF" id="PIRSF037016">
    <property type="entry name" value="Pseudouridin_synth_euk_prd"/>
    <property type="match status" value="1"/>
</dbReference>
<dbReference type="SUPFAM" id="SSF55120">
    <property type="entry name" value="Pseudouridine synthase"/>
    <property type="match status" value="1"/>
</dbReference>
<dbReference type="PROSITE" id="PS50984">
    <property type="entry name" value="TRUD"/>
    <property type="match status" value="1"/>
</dbReference>
<dbReference type="PROSITE" id="PS01268">
    <property type="entry name" value="UPF0024"/>
    <property type="match status" value="1"/>
</dbReference>
<reference key="1">
    <citation type="submission" date="2008-03" db="EMBL/GenBank/DDBJ databases">
        <title>Complete sequence of Thermoproteus neutrophilus V24Sta.</title>
        <authorList>
            <consortium name="US DOE Joint Genome Institute"/>
            <person name="Copeland A."/>
            <person name="Lucas S."/>
            <person name="Lapidus A."/>
            <person name="Glavina del Rio T."/>
            <person name="Dalin E."/>
            <person name="Tice H."/>
            <person name="Bruce D."/>
            <person name="Goodwin L."/>
            <person name="Pitluck S."/>
            <person name="Sims D."/>
            <person name="Brettin T."/>
            <person name="Detter J.C."/>
            <person name="Han C."/>
            <person name="Kuske C.R."/>
            <person name="Schmutz J."/>
            <person name="Larimer F."/>
            <person name="Land M."/>
            <person name="Hauser L."/>
            <person name="Kyrpides N."/>
            <person name="Mikhailova N."/>
            <person name="Biddle J.F."/>
            <person name="Zhang Z."/>
            <person name="Fitz-Gibbon S.T."/>
            <person name="Lowe T.M."/>
            <person name="Saltikov C."/>
            <person name="House C.H."/>
            <person name="Richardson P."/>
        </authorList>
    </citation>
    <scope>NUCLEOTIDE SEQUENCE [LARGE SCALE GENOMIC DNA]</scope>
    <source>
        <strain>DSM 2338 / JCM 9278 / NBRC 100436 / V24Sta</strain>
    </source>
</reference>
<gene>
    <name evidence="1" type="primary">truD</name>
    <name type="ordered locus">Tneu_1594</name>
</gene>
<name>TRUD_PYRNV</name>
<keyword id="KW-0413">Isomerase</keyword>
<keyword id="KW-0819">tRNA processing</keyword>
<protein>
    <recommendedName>
        <fullName evidence="1">Probable tRNA pseudouridine synthase D</fullName>
        <ecNumber evidence="1">5.4.99.27</ecNumber>
    </recommendedName>
    <alternativeName>
        <fullName evidence="1">tRNA pseudouridine(13) synthase</fullName>
    </alternativeName>
    <alternativeName>
        <fullName evidence="1">tRNA pseudouridylate synthase D</fullName>
    </alternativeName>
    <alternativeName>
        <fullName evidence="1">tRNA-uridine isomerase D</fullName>
    </alternativeName>
</protein>
<evidence type="ECO:0000255" key="1">
    <source>
        <dbReference type="HAMAP-Rule" id="MF_01082"/>
    </source>
</evidence>
<comment type="function">
    <text evidence="1">Could be responsible for synthesis of pseudouridine from uracil-13 in transfer RNAs.</text>
</comment>
<comment type="catalytic activity">
    <reaction evidence="1">
        <text>uridine(13) in tRNA = pseudouridine(13) in tRNA</text>
        <dbReference type="Rhea" id="RHEA:42540"/>
        <dbReference type="Rhea" id="RHEA-COMP:10105"/>
        <dbReference type="Rhea" id="RHEA-COMP:10106"/>
        <dbReference type="ChEBI" id="CHEBI:65314"/>
        <dbReference type="ChEBI" id="CHEBI:65315"/>
        <dbReference type="EC" id="5.4.99.27"/>
    </reaction>
</comment>
<comment type="similarity">
    <text evidence="1">Belongs to the pseudouridine synthase TruD family.</text>
</comment>
<accession>B1Y9W7</accession>
<proteinExistence type="inferred from homology"/>
<sequence>MIEAPPFDRSLGMLYYATDTYPSGGVIKAKPEDFLVEEVLYDGTVVALEGVSIEPRVGGWTWIHVVKRNVDTVKLVLRLAKALGLRSRDISIGGIKDTRAVTSQIVSVRGNVADLPKIPNVQFLGLWPMDKPIAPSLIYGNRFTIVLRNVERRECAEAALAALGKAALPNYYGYQRFGTIRPVSHLLGKALLRKDAEGFFHVMFCKIFPYESEAAKKARELACRGEYQKALEAFPRGFVEERALLRRLVRGSDLWNAAMAIPLQILRIYIEAAQSHLFNLLLSKRMELGPLDRPVEGDLVEVNGQVTYYVEDLGGEVVVPVVGAGVRMPRGRVLEAFVKVLKEEGLEPSAFLQMPRGLRAYGSYRRARLQARDLAYSLGDDLVLRFVLPRGGYATVLLREVVKPTEPYRHGF</sequence>